<gene>
    <name evidence="1" type="primary">smpB</name>
    <name type="ordered locus">Ava_2325</name>
</gene>
<organism>
    <name type="scientific">Trichormus variabilis (strain ATCC 29413 / PCC 7937)</name>
    <name type="common">Anabaena variabilis</name>
    <dbReference type="NCBI Taxonomy" id="240292"/>
    <lineage>
        <taxon>Bacteria</taxon>
        <taxon>Bacillati</taxon>
        <taxon>Cyanobacteriota</taxon>
        <taxon>Cyanophyceae</taxon>
        <taxon>Nostocales</taxon>
        <taxon>Nostocaceae</taxon>
        <taxon>Trichormus</taxon>
    </lineage>
</organism>
<dbReference type="EMBL" id="CP000117">
    <property type="protein sequence ID" value="ABA21943.1"/>
    <property type="molecule type" value="Genomic_DNA"/>
</dbReference>
<dbReference type="SMR" id="Q3MAP3"/>
<dbReference type="STRING" id="240292.Ava_2325"/>
<dbReference type="KEGG" id="ava:Ava_2325"/>
<dbReference type="eggNOG" id="COG0691">
    <property type="taxonomic scope" value="Bacteria"/>
</dbReference>
<dbReference type="HOGENOM" id="CLU_108953_0_1_3"/>
<dbReference type="Proteomes" id="UP000002533">
    <property type="component" value="Chromosome"/>
</dbReference>
<dbReference type="GO" id="GO:0005829">
    <property type="term" value="C:cytosol"/>
    <property type="evidence" value="ECO:0007669"/>
    <property type="project" value="TreeGrafter"/>
</dbReference>
<dbReference type="GO" id="GO:0003723">
    <property type="term" value="F:RNA binding"/>
    <property type="evidence" value="ECO:0007669"/>
    <property type="project" value="UniProtKB-UniRule"/>
</dbReference>
<dbReference type="GO" id="GO:0070929">
    <property type="term" value="P:trans-translation"/>
    <property type="evidence" value="ECO:0007669"/>
    <property type="project" value="UniProtKB-UniRule"/>
</dbReference>
<dbReference type="CDD" id="cd09294">
    <property type="entry name" value="SmpB"/>
    <property type="match status" value="1"/>
</dbReference>
<dbReference type="Gene3D" id="2.40.280.10">
    <property type="match status" value="1"/>
</dbReference>
<dbReference type="HAMAP" id="MF_00023">
    <property type="entry name" value="SmpB"/>
    <property type="match status" value="1"/>
</dbReference>
<dbReference type="InterPro" id="IPR023620">
    <property type="entry name" value="SmpB"/>
</dbReference>
<dbReference type="InterPro" id="IPR000037">
    <property type="entry name" value="SsrA-bd_prot"/>
</dbReference>
<dbReference type="InterPro" id="IPR020081">
    <property type="entry name" value="SsrA-bd_prot_CS"/>
</dbReference>
<dbReference type="NCBIfam" id="NF003843">
    <property type="entry name" value="PRK05422.1"/>
    <property type="match status" value="1"/>
</dbReference>
<dbReference type="NCBIfam" id="TIGR00086">
    <property type="entry name" value="smpB"/>
    <property type="match status" value="1"/>
</dbReference>
<dbReference type="PANTHER" id="PTHR30308:SF2">
    <property type="entry name" value="SSRA-BINDING PROTEIN"/>
    <property type="match status" value="1"/>
</dbReference>
<dbReference type="PANTHER" id="PTHR30308">
    <property type="entry name" value="TMRNA-BINDING COMPONENT OF TRANS-TRANSLATION TAGGING COMPLEX"/>
    <property type="match status" value="1"/>
</dbReference>
<dbReference type="Pfam" id="PF01668">
    <property type="entry name" value="SmpB"/>
    <property type="match status" value="1"/>
</dbReference>
<dbReference type="SUPFAM" id="SSF74982">
    <property type="entry name" value="Small protein B (SmpB)"/>
    <property type="match status" value="1"/>
</dbReference>
<dbReference type="PROSITE" id="PS01317">
    <property type="entry name" value="SSRP"/>
    <property type="match status" value="1"/>
</dbReference>
<proteinExistence type="inferred from homology"/>
<evidence type="ECO:0000255" key="1">
    <source>
        <dbReference type="HAMAP-Rule" id="MF_00023"/>
    </source>
</evidence>
<evidence type="ECO:0000256" key="2">
    <source>
        <dbReference type="SAM" id="MobiDB-lite"/>
    </source>
</evidence>
<reference key="1">
    <citation type="journal article" date="2014" name="Stand. Genomic Sci.">
        <title>Complete genome sequence of Anabaena variabilis ATCC 29413.</title>
        <authorList>
            <person name="Thiel T."/>
            <person name="Pratte B.S."/>
            <person name="Zhong J."/>
            <person name="Goodwin L."/>
            <person name="Copeland A."/>
            <person name="Lucas S."/>
            <person name="Han C."/>
            <person name="Pitluck S."/>
            <person name="Land M.L."/>
            <person name="Kyrpides N.C."/>
            <person name="Woyke T."/>
        </authorList>
    </citation>
    <scope>NUCLEOTIDE SEQUENCE [LARGE SCALE GENOMIC DNA]</scope>
    <source>
        <strain>ATCC 29413 / PCC 7937</strain>
    </source>
</reference>
<keyword id="KW-0963">Cytoplasm</keyword>
<keyword id="KW-0694">RNA-binding</keyword>
<sequence>MSDKSESYKVITDNRQARYLYEILETFEAGIQLTGTEVKSIRAGKVNLQDGYALLRDGEIWLINAHISPYNASGQYFNHEPRRTRKLLLHRQEIRKLIGKVEQQGLTLVPLKMYLKRGWVKVSIALGKGKKLHDKRESLKRRQDQRDIQRAMKNY</sequence>
<feature type="chain" id="PRO_1000001993" description="SsrA-binding protein">
    <location>
        <begin position="1"/>
        <end position="155"/>
    </location>
</feature>
<feature type="region of interest" description="Disordered" evidence="2">
    <location>
        <begin position="135"/>
        <end position="155"/>
    </location>
</feature>
<name>SSRP_TRIV2</name>
<comment type="function">
    <text evidence="1">Required for rescue of stalled ribosomes mediated by trans-translation. Binds to transfer-messenger RNA (tmRNA), required for stable association of tmRNA with ribosomes. tmRNA and SmpB together mimic tRNA shape, replacing the anticodon stem-loop with SmpB. tmRNA is encoded by the ssrA gene; the 2 termini fold to resemble tRNA(Ala) and it encodes a 'tag peptide', a short internal open reading frame. During trans-translation Ala-aminoacylated tmRNA acts like a tRNA, entering the A-site of stalled ribosomes, displacing the stalled mRNA. The ribosome then switches to translate the ORF on the tmRNA; the nascent peptide is terminated with the 'tag peptide' encoded by the tmRNA and targeted for degradation. The ribosome is freed to recommence translation, which seems to be the essential function of trans-translation.</text>
</comment>
<comment type="subcellular location">
    <subcellularLocation>
        <location evidence="1">Cytoplasm</location>
    </subcellularLocation>
    <text evidence="1">The tmRNA-SmpB complex associates with stalled 70S ribosomes.</text>
</comment>
<comment type="similarity">
    <text evidence="1">Belongs to the SmpB family.</text>
</comment>
<accession>Q3MAP3</accession>
<protein>
    <recommendedName>
        <fullName evidence="1">SsrA-binding protein</fullName>
    </recommendedName>
    <alternativeName>
        <fullName evidence="1">Small protein B</fullName>
    </alternativeName>
</protein>